<name>EFM7_CANAL</name>
<dbReference type="EC" id="2.1.1.-" evidence="1"/>
<dbReference type="EMBL" id="CP017630">
    <property type="protein sequence ID" value="AOW31114.1"/>
    <property type="molecule type" value="Genomic_DNA"/>
</dbReference>
<dbReference type="RefSeq" id="XP_715151.1">
    <property type="nucleotide sequence ID" value="XM_710058.1"/>
</dbReference>
<dbReference type="SMR" id="Q5A013"/>
<dbReference type="FunCoup" id="Q5A013">
    <property type="interactions" value="151"/>
</dbReference>
<dbReference type="STRING" id="237561.Q5A013"/>
<dbReference type="EnsemblFungi" id="CR_03760W_A-T">
    <property type="protein sequence ID" value="CR_03760W_A-T-p1"/>
    <property type="gene ID" value="CR_03760W_A"/>
</dbReference>
<dbReference type="GeneID" id="3643178"/>
<dbReference type="KEGG" id="cal:CAALFM_CR03760WA"/>
<dbReference type="CGD" id="CAL0000181775">
    <property type="gene designation" value="orf19.11853"/>
</dbReference>
<dbReference type="VEuPathDB" id="FungiDB:CR_03760W_A"/>
<dbReference type="eggNOG" id="KOG2920">
    <property type="taxonomic scope" value="Eukaryota"/>
</dbReference>
<dbReference type="HOGENOM" id="CLU_032409_0_0_1"/>
<dbReference type="InParanoid" id="Q5A013"/>
<dbReference type="OMA" id="VGHNPLW"/>
<dbReference type="OrthoDB" id="46564at2759"/>
<dbReference type="PRO" id="PR:Q5A013"/>
<dbReference type="Proteomes" id="UP000000559">
    <property type="component" value="Chromosome R"/>
</dbReference>
<dbReference type="GO" id="GO:0005737">
    <property type="term" value="C:cytoplasm"/>
    <property type="evidence" value="ECO:0007669"/>
    <property type="project" value="UniProtKB-SubCell"/>
</dbReference>
<dbReference type="GO" id="GO:0071885">
    <property type="term" value="F:N-terminal protein N-methyltransferase activity"/>
    <property type="evidence" value="ECO:0007669"/>
    <property type="project" value="UniProtKB-UniRule"/>
</dbReference>
<dbReference type="GO" id="GO:0008276">
    <property type="term" value="F:protein methyltransferase activity"/>
    <property type="evidence" value="ECO:0000318"/>
    <property type="project" value="GO_Central"/>
</dbReference>
<dbReference type="GO" id="GO:0016279">
    <property type="term" value="F:protein-lysine N-methyltransferase activity"/>
    <property type="evidence" value="ECO:0007669"/>
    <property type="project" value="UniProtKB-UniRule"/>
</dbReference>
<dbReference type="GO" id="GO:0032259">
    <property type="term" value="P:methylation"/>
    <property type="evidence" value="ECO:0007669"/>
    <property type="project" value="UniProtKB-KW"/>
</dbReference>
<dbReference type="GO" id="GO:0000183">
    <property type="term" value="P:rDNA heterochromatin formation"/>
    <property type="evidence" value="ECO:0007669"/>
    <property type="project" value="EnsemblFungi"/>
</dbReference>
<dbReference type="CDD" id="cd02440">
    <property type="entry name" value="AdoMet_MTases"/>
    <property type="match status" value="1"/>
</dbReference>
<dbReference type="Gene3D" id="3.40.50.150">
    <property type="entry name" value="Vaccinia Virus protein VP39"/>
    <property type="match status" value="1"/>
</dbReference>
<dbReference type="HAMAP" id="MF_03223">
    <property type="entry name" value="Methyltr_EFM7"/>
    <property type="match status" value="1"/>
</dbReference>
<dbReference type="InterPro" id="IPR025784">
    <property type="entry name" value="EFM7"/>
</dbReference>
<dbReference type="InterPro" id="IPR019410">
    <property type="entry name" value="Methyltransf_16"/>
</dbReference>
<dbReference type="InterPro" id="IPR029063">
    <property type="entry name" value="SAM-dependent_MTases_sf"/>
</dbReference>
<dbReference type="PANTHER" id="PTHR14614">
    <property type="entry name" value="HEPATOCELLULAR CARCINOMA-ASSOCIATED ANTIGEN"/>
    <property type="match status" value="1"/>
</dbReference>
<dbReference type="PANTHER" id="PTHR14614:SF10">
    <property type="entry name" value="PROTEIN N-TERMINAL AND LYSINE N-METHYLTRANSFERASE EFM7"/>
    <property type="match status" value="1"/>
</dbReference>
<dbReference type="Pfam" id="PF10294">
    <property type="entry name" value="Methyltransf_16"/>
    <property type="match status" value="1"/>
</dbReference>
<dbReference type="SUPFAM" id="SSF53335">
    <property type="entry name" value="S-adenosyl-L-methionine-dependent methyltransferases"/>
    <property type="match status" value="1"/>
</dbReference>
<dbReference type="PROSITE" id="PS51560">
    <property type="entry name" value="SAM_MT_NNT1"/>
    <property type="match status" value="1"/>
</dbReference>
<sequence>MSEDEISIEGDLFEEPEGFLPERPSSHFSTYKRKIPNAEPQEITMKLVGHNPLYGHLLWNAGIYTADYLDKHSDTLVQGKKILELGAASALPSLVCSLNHAKEVIVTDYPDPDLLSHMEYSFNDLKEKTKYELSPWKVKGYIWGHDLGELLFDEPGRKLAEEEKFDLIILSDLVFNHSEHHKLLDTCRQSLKRNGGKCLVVFSPHRPYLLQDDLSFFETAKQYQFKTEKIEMVTWKPMFEEDEETADIRARVYAFFLIPEWE</sequence>
<accession>Q5A013</accession>
<accession>A0A1D8PSJ7</accession>
<reference key="1">
    <citation type="journal article" date="2004" name="Proc. Natl. Acad. Sci. U.S.A.">
        <title>The diploid genome sequence of Candida albicans.</title>
        <authorList>
            <person name="Jones T."/>
            <person name="Federspiel N.A."/>
            <person name="Chibana H."/>
            <person name="Dungan J."/>
            <person name="Kalman S."/>
            <person name="Magee B.B."/>
            <person name="Newport G."/>
            <person name="Thorstenson Y.R."/>
            <person name="Agabian N."/>
            <person name="Magee P.T."/>
            <person name="Davis R.W."/>
            <person name="Scherer S."/>
        </authorList>
    </citation>
    <scope>NUCLEOTIDE SEQUENCE [LARGE SCALE GENOMIC DNA]</scope>
    <source>
        <strain>SC5314 / ATCC MYA-2876</strain>
    </source>
</reference>
<reference key="2">
    <citation type="journal article" date="2007" name="Genome Biol.">
        <title>Assembly of the Candida albicans genome into sixteen supercontigs aligned on the eight chromosomes.</title>
        <authorList>
            <person name="van het Hoog M."/>
            <person name="Rast T.J."/>
            <person name="Martchenko M."/>
            <person name="Grindle S."/>
            <person name="Dignard D."/>
            <person name="Hogues H."/>
            <person name="Cuomo C."/>
            <person name="Berriman M."/>
            <person name="Scherer S."/>
            <person name="Magee B.B."/>
            <person name="Whiteway M."/>
            <person name="Chibana H."/>
            <person name="Nantel A."/>
            <person name="Magee P.T."/>
        </authorList>
    </citation>
    <scope>GENOME REANNOTATION</scope>
    <source>
        <strain>SC5314 / ATCC MYA-2876</strain>
    </source>
</reference>
<reference key="3">
    <citation type="journal article" date="2013" name="Genome Biol.">
        <title>Assembly of a phased diploid Candida albicans genome facilitates allele-specific measurements and provides a simple model for repeat and indel structure.</title>
        <authorList>
            <person name="Muzzey D."/>
            <person name="Schwartz K."/>
            <person name="Weissman J.S."/>
            <person name="Sherlock G."/>
        </authorList>
    </citation>
    <scope>NUCLEOTIDE SEQUENCE [LARGE SCALE GENOMIC DNA]</scope>
    <scope>GENOME REANNOTATION</scope>
    <source>
        <strain>SC5314 / ATCC MYA-2876</strain>
    </source>
</reference>
<proteinExistence type="inferred from homology"/>
<comment type="function">
    <text evidence="1">S-adenosyl-L-methionine-dependent protein methyltransferase that trimethylates the N-terminal glycine 'Gly-2' of elongation factor 1-alpha, before also catalyzing the mono- and dimethylation of 'Lys-3'.</text>
</comment>
<comment type="subcellular location">
    <subcellularLocation>
        <location evidence="1">Cytoplasm</location>
    </subcellularLocation>
</comment>
<comment type="similarity">
    <text evidence="1">Belongs to the class I-like SAM-binding methyltransferase superfamily. EFM7 family.</text>
</comment>
<evidence type="ECO:0000255" key="1">
    <source>
        <dbReference type="HAMAP-Rule" id="MF_03223"/>
    </source>
</evidence>
<keyword id="KW-0963">Cytoplasm</keyword>
<keyword id="KW-0489">Methyltransferase</keyword>
<keyword id="KW-1185">Reference proteome</keyword>
<keyword id="KW-0949">S-adenosyl-L-methionine</keyword>
<keyword id="KW-0808">Transferase</keyword>
<feature type="chain" id="PRO_0000096891" description="Protein N-terminal and lysine N-methyltransferase EFM7">
    <location>
        <begin position="1"/>
        <end position="262"/>
    </location>
</feature>
<feature type="binding site" evidence="1">
    <location>
        <position position="59"/>
    </location>
    <ligand>
        <name>S-adenosyl-L-methionine</name>
        <dbReference type="ChEBI" id="CHEBI:59789"/>
    </ligand>
</feature>
<feature type="binding site" evidence="1">
    <location>
        <begin position="86"/>
        <end position="88"/>
    </location>
    <ligand>
        <name>S-adenosyl-L-methionine</name>
        <dbReference type="ChEBI" id="CHEBI:59789"/>
    </ligand>
</feature>
<feature type="binding site" evidence="1">
    <location>
        <position position="108"/>
    </location>
    <ligand>
        <name>S-adenosyl-L-methionine</name>
        <dbReference type="ChEBI" id="CHEBI:59789"/>
    </ligand>
</feature>
<feature type="binding site" evidence="1">
    <location>
        <position position="143"/>
    </location>
    <ligand>
        <name>S-adenosyl-L-methionine</name>
        <dbReference type="ChEBI" id="CHEBI:59789"/>
    </ligand>
</feature>
<feature type="binding site" evidence="1">
    <location>
        <position position="171"/>
    </location>
    <ligand>
        <name>S-adenosyl-L-methionine</name>
        <dbReference type="ChEBI" id="CHEBI:59789"/>
    </ligand>
</feature>
<organism>
    <name type="scientific">Candida albicans (strain SC5314 / ATCC MYA-2876)</name>
    <name type="common">Yeast</name>
    <dbReference type="NCBI Taxonomy" id="237561"/>
    <lineage>
        <taxon>Eukaryota</taxon>
        <taxon>Fungi</taxon>
        <taxon>Dikarya</taxon>
        <taxon>Ascomycota</taxon>
        <taxon>Saccharomycotina</taxon>
        <taxon>Pichiomycetes</taxon>
        <taxon>Debaryomycetaceae</taxon>
        <taxon>Candida/Lodderomyces clade</taxon>
        <taxon>Candida</taxon>
    </lineage>
</organism>
<protein>
    <recommendedName>
        <fullName evidence="1">Protein N-terminal and lysine N-methyltransferase EFM7</fullName>
        <ecNumber evidence="1">2.1.1.-</ecNumber>
    </recommendedName>
    <alternativeName>
        <fullName evidence="1">Elongation factor methyltransferase 7</fullName>
    </alternativeName>
</protein>
<gene>
    <name evidence="1" type="primary">EFM7</name>
    <name type="synonym">NNT1</name>
    <name type="ordered locus">CAALFM_CR03760WA</name>
    <name type="ORF">CaO19.11853</name>
    <name type="ORF">CaO19.4375</name>
</gene>